<protein>
    <recommendedName>
        <fullName evidence="7">AA9 family lytic polysaccharide monooxygenase D</fullName>
        <shortName evidence="7">LPMO9D</shortName>
        <ecNumber evidence="6">1.14.99.56</ecNumber>
    </recommendedName>
    <alternativeName>
        <fullName evidence="8">Cellulase LPMO9D</fullName>
    </alternativeName>
    <alternativeName>
        <fullName evidence="8">Endo-beta-1,4-glucanase LPMO9D</fullName>
        <shortName evidence="8">Endoglucanase LPMO9D</shortName>
    </alternativeName>
    <alternativeName>
        <fullName evidence="8">Glycosyl hydrolase 61 family protein LPMO9D</fullName>
    </alternativeName>
</protein>
<gene>
    <name evidence="7" type="primary">LPMO9D</name>
</gene>
<accession>A0A218MJF1</accession>
<sequence length="255" mass="26979">MYRTLGSIALLAGGAAAHGAVTSYNIAGKDYPGYSGFAPTGQDVIQWQWPDYNPVLSASDPKLRCNGGTGAALYAEAAPGDTITATWAQWTHSQGPILVWMYKCPGDFSSCDGSGAGWFKIDEAGFHGDGTTVFLDTETPSGWDIAKLVGGNKSWSSKIPDGLAPGNYLVRHELIALHQANNPQFYPECAQIKVTGSGTAEPAASYKAAIPGYCQQSDPNISFNINDHSLPQEYKIPGPPVFKGTASAKARAFQA</sequence>
<organism>
    <name type="scientific">Thermothelomyces thermophilus</name>
    <name type="common">Myceliophthora thermophila</name>
    <dbReference type="NCBI Taxonomy" id="78579"/>
    <lineage>
        <taxon>Eukaryota</taxon>
        <taxon>Fungi</taxon>
        <taxon>Dikarya</taxon>
        <taxon>Ascomycota</taxon>
        <taxon>Pezizomycotina</taxon>
        <taxon>Sordariomycetes</taxon>
        <taxon>Sordariomycetidae</taxon>
        <taxon>Sordariales</taxon>
        <taxon>Chaetomiaceae</taxon>
        <taxon>Thermothelomyces</taxon>
    </lineage>
</organism>
<proteinExistence type="evidence at protein level"/>
<dbReference type="EC" id="1.14.99.56" evidence="6"/>
<dbReference type="EMBL" id="KY924631">
    <property type="protein sequence ID" value="ASE05899.1"/>
    <property type="molecule type" value="mRNA"/>
</dbReference>
<dbReference type="SMR" id="A0A218MJF1"/>
<dbReference type="VEuPathDB" id="FungiDB:MYCTH_92668"/>
<dbReference type="OMA" id="WKQWTHE"/>
<dbReference type="GO" id="GO:0005576">
    <property type="term" value="C:extracellular region"/>
    <property type="evidence" value="ECO:0007669"/>
    <property type="project" value="UniProtKB-SubCell"/>
</dbReference>
<dbReference type="GO" id="GO:0046872">
    <property type="term" value="F:metal ion binding"/>
    <property type="evidence" value="ECO:0007669"/>
    <property type="project" value="UniProtKB-KW"/>
</dbReference>
<dbReference type="GO" id="GO:0004497">
    <property type="term" value="F:monooxygenase activity"/>
    <property type="evidence" value="ECO:0007669"/>
    <property type="project" value="UniProtKB-KW"/>
</dbReference>
<dbReference type="GO" id="GO:0030245">
    <property type="term" value="P:cellulose catabolic process"/>
    <property type="evidence" value="ECO:0007669"/>
    <property type="project" value="UniProtKB-KW"/>
</dbReference>
<dbReference type="CDD" id="cd21175">
    <property type="entry name" value="LPMO_AA9"/>
    <property type="match status" value="1"/>
</dbReference>
<dbReference type="Gene3D" id="2.70.50.70">
    <property type="match status" value="1"/>
</dbReference>
<dbReference type="InterPro" id="IPR049892">
    <property type="entry name" value="AA9"/>
</dbReference>
<dbReference type="InterPro" id="IPR005103">
    <property type="entry name" value="AA9_LPMO"/>
</dbReference>
<dbReference type="PANTHER" id="PTHR33353:SF19">
    <property type="entry name" value="GLYCOSYLHYDROLASE FAMILY 61-8 PROTEIN"/>
    <property type="match status" value="1"/>
</dbReference>
<dbReference type="PANTHER" id="PTHR33353">
    <property type="entry name" value="PUTATIVE (AFU_ORTHOLOGUE AFUA_1G12560)-RELATED"/>
    <property type="match status" value="1"/>
</dbReference>
<dbReference type="Pfam" id="PF03443">
    <property type="entry name" value="AA9"/>
    <property type="match status" value="1"/>
</dbReference>
<reference key="1">
    <citation type="submission" date="2017-04" db="EMBL/GenBank/DDBJ databases">
        <authorList>
            <person name="Afonso C.L."/>
            <person name="Miller P.J."/>
            <person name="Scott M.A."/>
            <person name="Spackman E."/>
            <person name="Goraichik I."/>
            <person name="Dimitrov K.M."/>
            <person name="Suarez D.L."/>
            <person name="Swayne D.E."/>
        </authorList>
    </citation>
    <scope>NUCLEOTIDE SEQUENCE [MRNA]</scope>
    <source>
        <strain>C1</strain>
    </source>
</reference>
<reference key="2">
    <citation type="journal article" date="2018" name="Appl. Microbiol. Biotechnol.">
        <title>Quantification of the catalytic performance of C1-cellulose-specific lytic polysaccharide monooxygenases.</title>
        <authorList>
            <person name="Frommhagen M."/>
            <person name="Westphal A.H."/>
            <person name="Hilgers R."/>
            <person name="Koetsier M.J."/>
            <person name="Hinz S.W.A."/>
            <person name="Visser J."/>
            <person name="Gruppen H."/>
            <person name="van Berkel W.J.H."/>
            <person name="Kabel M.A."/>
        </authorList>
    </citation>
    <scope>FUNCTION</scope>
    <scope>CATALYTIC ACTIVITY</scope>
</reference>
<evidence type="ECO:0000250" key="1">
    <source>
        <dbReference type="UniProtKB" id="G2QAB5"/>
    </source>
</evidence>
<evidence type="ECO:0000250" key="2">
    <source>
        <dbReference type="UniProtKB" id="G2QCJ3"/>
    </source>
</evidence>
<evidence type="ECO:0000250" key="3">
    <source>
        <dbReference type="UniProtKB" id="Q1K8B6"/>
    </source>
</evidence>
<evidence type="ECO:0000255" key="4"/>
<evidence type="ECO:0000255" key="5">
    <source>
        <dbReference type="PROSITE-ProRule" id="PRU00498"/>
    </source>
</evidence>
<evidence type="ECO:0000269" key="6">
    <source>
    </source>
</evidence>
<evidence type="ECO:0000303" key="7">
    <source>
    </source>
</evidence>
<evidence type="ECO:0000305" key="8"/>
<evidence type="ECO:0000305" key="9">
    <source>
    </source>
</evidence>
<keyword id="KW-0119">Carbohydrate metabolism</keyword>
<keyword id="KW-0136">Cellulose degradation</keyword>
<keyword id="KW-0186">Copper</keyword>
<keyword id="KW-1015">Disulfide bond</keyword>
<keyword id="KW-0325">Glycoprotein</keyword>
<keyword id="KW-0479">Metal-binding</keyword>
<keyword id="KW-0503">Monooxygenase</keyword>
<keyword id="KW-0560">Oxidoreductase</keyword>
<keyword id="KW-0624">Polysaccharide degradation</keyword>
<keyword id="KW-0964">Secreted</keyword>
<keyword id="KW-0732">Signal</keyword>
<comment type="function">
    <text evidence="1 6">Lytic polysaccharide monooxygenase (LPMO) that depolymerizes crystalline and amorphous polysaccharides via the oxidation of scissile alpha- or beta-(1-4)-glycosidic bonds, yielding specifically C1 oxidation product (PubMed:29196788). Catalysis by LPMOs requires the reduction of the active-site copper from Cu(II) to Cu(I) by a reducing agent and H(2)O(2) or O(2) as a cosubstrate (PubMed:29196788). Is active on regenerated amorphous cellulose (RAC) in the presence of ascorbic acid or 3-methylcatechol (PubMed:29196788). Also acts on phosphoric acid swollen cellulose (PASC) as a substrate (By similarity).</text>
</comment>
<comment type="catalytic activity">
    <reaction evidence="6">
        <text>[(1-&gt;4)-beta-D-glucosyl]n+m + reduced acceptor + O2 = 4-dehydro-beta-D-glucosyl-[(1-&gt;4)-beta-D-glucosyl]n-1 + [(1-&gt;4)-beta-D-glucosyl]m + acceptor + H2O.</text>
        <dbReference type="EC" id="1.14.99.56"/>
    </reaction>
</comment>
<comment type="cofactor">
    <cofactor evidence="1">
        <name>Cu(2+)</name>
        <dbReference type="ChEBI" id="CHEBI:29036"/>
    </cofactor>
    <text evidence="1">Binds 1 copper ion per subunit.</text>
</comment>
<comment type="subcellular location">
    <subcellularLocation>
        <location evidence="9">Secreted</location>
    </subcellularLocation>
</comment>
<comment type="biotechnology">
    <text evidence="2">Lignocellulose is the most abundant polymeric composite on Earth and is a recalcitrant but promising renewable substrate for industrial biotechnology applications. Together with cellobiose dehydrogenases (CDHs) an enzymatic system capable of oxidative cellulose cleavage is formed, which increases the efficiency of cellulases and put LPMOs at focus of biofuel research.</text>
</comment>
<comment type="similarity">
    <text evidence="8">Belongs to the polysaccharide monooxygenase AA9 family.</text>
</comment>
<feature type="signal peptide" evidence="4">
    <location>
        <begin position="1"/>
        <end position="19"/>
    </location>
</feature>
<feature type="chain" id="PRO_5011111206" description="AA9 family lytic polysaccharide monooxygenase D">
    <location>
        <begin position="20"/>
        <end position="255"/>
    </location>
</feature>
<feature type="binding site" evidence="1">
    <location>
        <position position="18"/>
    </location>
    <ligand>
        <name>Cu(2+)</name>
        <dbReference type="ChEBI" id="CHEBI:29036"/>
        <note>catalytic</note>
    </ligand>
</feature>
<feature type="binding site" evidence="1">
    <location>
        <position position="92"/>
    </location>
    <ligand>
        <name>Cu(2+)</name>
        <dbReference type="ChEBI" id="CHEBI:29036"/>
        <note>catalytic</note>
    </ligand>
</feature>
<feature type="binding site" evidence="3">
    <location>
        <position position="178"/>
    </location>
    <ligand>
        <name>O2</name>
        <dbReference type="ChEBI" id="CHEBI:15379"/>
    </ligand>
</feature>
<feature type="binding site" evidence="3">
    <location>
        <position position="184"/>
    </location>
    <ligand>
        <name>O2</name>
        <dbReference type="ChEBI" id="CHEBI:15379"/>
    </ligand>
</feature>
<feature type="binding site" evidence="1">
    <location>
        <position position="186"/>
    </location>
    <ligand>
        <name>Cu(2+)</name>
        <dbReference type="ChEBI" id="CHEBI:29036"/>
        <note>catalytic</note>
    </ligand>
</feature>
<feature type="glycosylation site" description="N-linked (GlcNAc...) asparagine" evidence="5">
    <location>
        <position position="152"/>
    </location>
</feature>
<feature type="glycosylation site" description="N-linked (GlcNAc...) asparagine" evidence="5">
    <location>
        <position position="220"/>
    </location>
</feature>
<feature type="disulfide bond" evidence="1">
    <location>
        <begin position="65"/>
        <end position="189"/>
    </location>
</feature>
<feature type="disulfide bond" evidence="1">
    <location>
        <begin position="104"/>
        <end position="111"/>
    </location>
</feature>
<name>LP9D_THETO</name>